<sequence>MKTQMTRDNLATARTLSEALPYLQRFNDAVVVVKFGGNAMGDDAEMASFARDMVLLRQVGVNPVVVHGGGPMINDMLAKLGIESTFLNGKRVTDAATVDVVEMVLSGRVNKRIVQAINAQGGKAVGLSGKDANLITCVPADPELGFVGDPSQVDPSVINTLFEDDIIPVIAPLGQGAEGETYNINGDTAAGAIASALQADRLLLLTNVSGVKNAAGDVVTELTAADVDAMVADGTIAGGMIPKTETALQAVRTGVRACIIVDGRVPNAVLLELFTEHGAGSMIRA</sequence>
<evidence type="ECO:0000255" key="1">
    <source>
        <dbReference type="HAMAP-Rule" id="MF_00082"/>
    </source>
</evidence>
<keyword id="KW-0028">Amino-acid biosynthesis</keyword>
<keyword id="KW-0055">Arginine biosynthesis</keyword>
<keyword id="KW-0067">ATP-binding</keyword>
<keyword id="KW-0963">Cytoplasm</keyword>
<keyword id="KW-0418">Kinase</keyword>
<keyword id="KW-0547">Nucleotide-binding</keyword>
<keyword id="KW-1185">Reference proteome</keyword>
<keyword id="KW-0808">Transferase</keyword>
<feature type="chain" id="PRO_0000264715" description="Acetylglutamate kinase">
    <location>
        <begin position="1"/>
        <end position="285"/>
    </location>
</feature>
<feature type="binding site" evidence="1">
    <location>
        <begin position="69"/>
        <end position="70"/>
    </location>
    <ligand>
        <name>substrate</name>
    </ligand>
</feature>
<feature type="binding site" evidence="1">
    <location>
        <position position="91"/>
    </location>
    <ligand>
        <name>substrate</name>
    </ligand>
</feature>
<feature type="binding site" evidence="1">
    <location>
        <position position="183"/>
    </location>
    <ligand>
        <name>substrate</name>
    </ligand>
</feature>
<feature type="site" description="Transition state stabilizer" evidence="1">
    <location>
        <position position="34"/>
    </location>
</feature>
<feature type="site" description="Transition state stabilizer" evidence="1">
    <location>
        <position position="243"/>
    </location>
</feature>
<name>ARGB_JANSC</name>
<dbReference type="EC" id="2.7.2.8" evidence="1"/>
<dbReference type="EMBL" id="CP000264">
    <property type="protein sequence ID" value="ABD53550.1"/>
    <property type="molecule type" value="Genomic_DNA"/>
</dbReference>
<dbReference type="RefSeq" id="WP_011453758.1">
    <property type="nucleotide sequence ID" value="NC_007802.1"/>
</dbReference>
<dbReference type="SMR" id="Q28UR2"/>
<dbReference type="STRING" id="290400.Jann_0633"/>
<dbReference type="KEGG" id="jan:Jann_0633"/>
<dbReference type="eggNOG" id="COG0548">
    <property type="taxonomic scope" value="Bacteria"/>
</dbReference>
<dbReference type="HOGENOM" id="CLU_053680_0_0_5"/>
<dbReference type="OrthoDB" id="9803155at2"/>
<dbReference type="UniPathway" id="UPA00068">
    <property type="reaction ID" value="UER00107"/>
</dbReference>
<dbReference type="Proteomes" id="UP000008326">
    <property type="component" value="Chromosome"/>
</dbReference>
<dbReference type="GO" id="GO:0005737">
    <property type="term" value="C:cytoplasm"/>
    <property type="evidence" value="ECO:0007669"/>
    <property type="project" value="UniProtKB-SubCell"/>
</dbReference>
<dbReference type="GO" id="GO:0003991">
    <property type="term" value="F:acetylglutamate kinase activity"/>
    <property type="evidence" value="ECO:0007669"/>
    <property type="project" value="UniProtKB-UniRule"/>
</dbReference>
<dbReference type="GO" id="GO:0005524">
    <property type="term" value="F:ATP binding"/>
    <property type="evidence" value="ECO:0007669"/>
    <property type="project" value="UniProtKB-UniRule"/>
</dbReference>
<dbReference type="GO" id="GO:0042450">
    <property type="term" value="P:arginine biosynthetic process via ornithine"/>
    <property type="evidence" value="ECO:0007669"/>
    <property type="project" value="UniProtKB-UniRule"/>
</dbReference>
<dbReference type="GO" id="GO:0006526">
    <property type="term" value="P:L-arginine biosynthetic process"/>
    <property type="evidence" value="ECO:0007669"/>
    <property type="project" value="UniProtKB-UniPathway"/>
</dbReference>
<dbReference type="CDD" id="cd04250">
    <property type="entry name" value="AAK_NAGK-C"/>
    <property type="match status" value="1"/>
</dbReference>
<dbReference type="FunFam" id="3.40.1160.10:FF:000004">
    <property type="entry name" value="Acetylglutamate kinase"/>
    <property type="match status" value="1"/>
</dbReference>
<dbReference type="Gene3D" id="3.40.1160.10">
    <property type="entry name" value="Acetylglutamate kinase-like"/>
    <property type="match status" value="1"/>
</dbReference>
<dbReference type="HAMAP" id="MF_00082">
    <property type="entry name" value="ArgB"/>
    <property type="match status" value="1"/>
</dbReference>
<dbReference type="InterPro" id="IPR036393">
    <property type="entry name" value="AceGlu_kinase-like_sf"/>
</dbReference>
<dbReference type="InterPro" id="IPR004662">
    <property type="entry name" value="AcgluKinase_fam"/>
</dbReference>
<dbReference type="InterPro" id="IPR037528">
    <property type="entry name" value="ArgB"/>
</dbReference>
<dbReference type="InterPro" id="IPR001048">
    <property type="entry name" value="Asp/Glu/Uridylate_kinase"/>
</dbReference>
<dbReference type="InterPro" id="IPR001057">
    <property type="entry name" value="Glu/AcGlu_kinase"/>
</dbReference>
<dbReference type="InterPro" id="IPR041727">
    <property type="entry name" value="NAGK-C"/>
</dbReference>
<dbReference type="NCBIfam" id="TIGR00761">
    <property type="entry name" value="argB"/>
    <property type="match status" value="1"/>
</dbReference>
<dbReference type="PANTHER" id="PTHR23342">
    <property type="entry name" value="N-ACETYLGLUTAMATE SYNTHASE"/>
    <property type="match status" value="1"/>
</dbReference>
<dbReference type="PANTHER" id="PTHR23342:SF0">
    <property type="entry name" value="N-ACETYLGLUTAMATE SYNTHASE, MITOCHONDRIAL"/>
    <property type="match status" value="1"/>
</dbReference>
<dbReference type="Pfam" id="PF00696">
    <property type="entry name" value="AA_kinase"/>
    <property type="match status" value="1"/>
</dbReference>
<dbReference type="PIRSF" id="PIRSF000728">
    <property type="entry name" value="NAGK"/>
    <property type="match status" value="1"/>
</dbReference>
<dbReference type="PRINTS" id="PR00474">
    <property type="entry name" value="GLU5KINASE"/>
</dbReference>
<dbReference type="SUPFAM" id="SSF53633">
    <property type="entry name" value="Carbamate kinase-like"/>
    <property type="match status" value="1"/>
</dbReference>
<proteinExistence type="inferred from homology"/>
<organism>
    <name type="scientific">Jannaschia sp. (strain CCS1)</name>
    <dbReference type="NCBI Taxonomy" id="290400"/>
    <lineage>
        <taxon>Bacteria</taxon>
        <taxon>Pseudomonadati</taxon>
        <taxon>Pseudomonadota</taxon>
        <taxon>Alphaproteobacteria</taxon>
        <taxon>Rhodobacterales</taxon>
        <taxon>Roseobacteraceae</taxon>
        <taxon>Jannaschia</taxon>
    </lineage>
</organism>
<accession>Q28UR2</accession>
<protein>
    <recommendedName>
        <fullName evidence="1">Acetylglutamate kinase</fullName>
        <ecNumber evidence="1">2.7.2.8</ecNumber>
    </recommendedName>
    <alternativeName>
        <fullName evidence="1">N-acetyl-L-glutamate 5-phosphotransferase</fullName>
    </alternativeName>
    <alternativeName>
        <fullName evidence="1">NAG kinase</fullName>
        <shortName evidence="1">NAGK</shortName>
    </alternativeName>
</protein>
<gene>
    <name evidence="1" type="primary">argB</name>
    <name type="ordered locus">Jann_0633</name>
</gene>
<reference key="1">
    <citation type="submission" date="2006-02" db="EMBL/GenBank/DDBJ databases">
        <title>Complete sequence of chromosome of Jannaschia sp. CCS1.</title>
        <authorList>
            <consortium name="US DOE Joint Genome Institute"/>
            <person name="Copeland A."/>
            <person name="Lucas S."/>
            <person name="Lapidus A."/>
            <person name="Barry K."/>
            <person name="Detter J.C."/>
            <person name="Glavina del Rio T."/>
            <person name="Hammon N."/>
            <person name="Israni S."/>
            <person name="Pitluck S."/>
            <person name="Brettin T."/>
            <person name="Bruce D."/>
            <person name="Han C."/>
            <person name="Tapia R."/>
            <person name="Gilna P."/>
            <person name="Chertkov O."/>
            <person name="Saunders E."/>
            <person name="Schmutz J."/>
            <person name="Larimer F."/>
            <person name="Land M."/>
            <person name="Kyrpides N."/>
            <person name="Lykidis A."/>
            <person name="Moran M.A."/>
            <person name="Belas R."/>
            <person name="Ye W."/>
            <person name="Buchan A."/>
            <person name="Gonzalez J.M."/>
            <person name="Schell M.A."/>
            <person name="Richardson P."/>
        </authorList>
    </citation>
    <scope>NUCLEOTIDE SEQUENCE [LARGE SCALE GENOMIC DNA]</scope>
    <source>
        <strain>CCS1</strain>
    </source>
</reference>
<comment type="function">
    <text evidence="1">Catalyzes the ATP-dependent phosphorylation of N-acetyl-L-glutamate.</text>
</comment>
<comment type="catalytic activity">
    <reaction evidence="1">
        <text>N-acetyl-L-glutamate + ATP = N-acetyl-L-glutamyl 5-phosphate + ADP</text>
        <dbReference type="Rhea" id="RHEA:14629"/>
        <dbReference type="ChEBI" id="CHEBI:30616"/>
        <dbReference type="ChEBI" id="CHEBI:44337"/>
        <dbReference type="ChEBI" id="CHEBI:57936"/>
        <dbReference type="ChEBI" id="CHEBI:456216"/>
        <dbReference type="EC" id="2.7.2.8"/>
    </reaction>
</comment>
<comment type="pathway">
    <text evidence="1">Amino-acid biosynthesis; L-arginine biosynthesis; N(2)-acetyl-L-ornithine from L-glutamate: step 2/4.</text>
</comment>
<comment type="subcellular location">
    <subcellularLocation>
        <location evidence="1">Cytoplasm</location>
    </subcellularLocation>
</comment>
<comment type="similarity">
    <text evidence="1">Belongs to the acetylglutamate kinase family. ArgB subfamily.</text>
</comment>